<name>XYLB_KLEPN</name>
<proteinExistence type="inferred from homology"/>
<protein>
    <recommendedName>
        <fullName evidence="1">Xylulose kinase</fullName>
        <shortName evidence="1">Xylulokinase</shortName>
        <ecNumber evidence="1">2.7.1.17</ecNumber>
    </recommendedName>
</protein>
<dbReference type="EC" id="2.7.1.17" evidence="1"/>
<dbReference type="EMBL" id="X61059">
    <property type="protein sequence ID" value="CAA43390.1"/>
    <property type="molecule type" value="Genomic_DNA"/>
</dbReference>
<dbReference type="PIR" id="S25070">
    <property type="entry name" value="S25070"/>
</dbReference>
<dbReference type="SMR" id="P29444"/>
<dbReference type="GO" id="GO:0005524">
    <property type="term" value="F:ATP binding"/>
    <property type="evidence" value="ECO:0007669"/>
    <property type="project" value="UniProtKB-UniRule"/>
</dbReference>
<dbReference type="GO" id="GO:0004856">
    <property type="term" value="F:D-xylulokinase activity"/>
    <property type="evidence" value="ECO:0007669"/>
    <property type="project" value="UniProtKB-UniRule"/>
</dbReference>
<dbReference type="GO" id="GO:0042732">
    <property type="term" value="P:D-xylose metabolic process"/>
    <property type="evidence" value="ECO:0007669"/>
    <property type="project" value="UniProtKB-KW"/>
</dbReference>
<dbReference type="GO" id="GO:0005998">
    <property type="term" value="P:xylulose catabolic process"/>
    <property type="evidence" value="ECO:0007669"/>
    <property type="project" value="UniProtKB-UniRule"/>
</dbReference>
<dbReference type="CDD" id="cd07808">
    <property type="entry name" value="ASKHA_NBD_FGGY_EcXK-like"/>
    <property type="match status" value="1"/>
</dbReference>
<dbReference type="Gene3D" id="3.30.420.40">
    <property type="match status" value="2"/>
</dbReference>
<dbReference type="HAMAP" id="MF_02220">
    <property type="entry name" value="XylB"/>
    <property type="match status" value="1"/>
</dbReference>
<dbReference type="InterPro" id="IPR043129">
    <property type="entry name" value="ATPase_NBD"/>
</dbReference>
<dbReference type="InterPro" id="IPR000577">
    <property type="entry name" value="Carb_kinase_FGGY"/>
</dbReference>
<dbReference type="InterPro" id="IPR018483">
    <property type="entry name" value="Carb_kinase_FGGY_CS"/>
</dbReference>
<dbReference type="InterPro" id="IPR018485">
    <property type="entry name" value="FGGY_C"/>
</dbReference>
<dbReference type="InterPro" id="IPR050406">
    <property type="entry name" value="FGGY_Carb_Kinase"/>
</dbReference>
<dbReference type="InterPro" id="IPR018484">
    <property type="entry name" value="FGGY_N"/>
</dbReference>
<dbReference type="InterPro" id="IPR006000">
    <property type="entry name" value="Xylulokinase"/>
</dbReference>
<dbReference type="NCBIfam" id="NF011601">
    <property type="entry name" value="PRK15027.1"/>
    <property type="match status" value="1"/>
</dbReference>
<dbReference type="NCBIfam" id="TIGR01312">
    <property type="entry name" value="XylB"/>
    <property type="match status" value="1"/>
</dbReference>
<dbReference type="PANTHER" id="PTHR43095">
    <property type="entry name" value="SUGAR KINASE"/>
    <property type="match status" value="1"/>
</dbReference>
<dbReference type="PANTHER" id="PTHR43095:SF6">
    <property type="entry name" value="XYLULOSE KINASE"/>
    <property type="match status" value="1"/>
</dbReference>
<dbReference type="Pfam" id="PF02782">
    <property type="entry name" value="FGGY_C"/>
    <property type="match status" value="1"/>
</dbReference>
<dbReference type="Pfam" id="PF00370">
    <property type="entry name" value="FGGY_N"/>
    <property type="match status" value="1"/>
</dbReference>
<dbReference type="PIRSF" id="PIRSF000538">
    <property type="entry name" value="GlpK"/>
    <property type="match status" value="1"/>
</dbReference>
<dbReference type="SUPFAM" id="SSF53067">
    <property type="entry name" value="Actin-like ATPase domain"/>
    <property type="match status" value="2"/>
</dbReference>
<dbReference type="PROSITE" id="PS00933">
    <property type="entry name" value="FGGY_KINASES_1"/>
    <property type="match status" value="1"/>
</dbReference>
<dbReference type="PROSITE" id="PS00445">
    <property type="entry name" value="FGGY_KINASES_2"/>
    <property type="match status" value="1"/>
</dbReference>
<gene>
    <name evidence="1" type="primary">xylB</name>
</gene>
<feature type="chain" id="PRO_0000059551" description="Xylulose kinase">
    <location>
        <begin position="1"/>
        <end position="483"/>
    </location>
</feature>
<feature type="active site" description="Proton acceptor" evidence="1">
    <location>
        <position position="233"/>
    </location>
</feature>
<feature type="binding site" evidence="1">
    <location>
        <begin position="77"/>
        <end position="78"/>
    </location>
    <ligand>
        <name>substrate</name>
    </ligand>
</feature>
<feature type="site" description="Important for activity" evidence="1">
    <location>
        <position position="6"/>
    </location>
</feature>
<accession>P29444</accession>
<sequence>MYIGIDLGTSGVKAILLNEQGEVVASHTEKLTVSRPHPLWSEQDPEQWWLATDTAMKALGAHDSLRHVKGLGIAGQMHGATLLDKSLQVLRPAILWNDGRCAEECQLLEDKVSASRQITGNLMMPGFTAPKLLWVQRHEAAVFSQVDKVLLPKDYLRLRMTGELASDMSDAAGTMWLDVARRDWSDEMLAACDLSRDAMPALFEGSDVTGQLRPEVAQAWNMPPALVVGGGGDNAAGAVGIGMADAGQAMLSLGTSGVYFAVSEGFLSKPESAVHSFCHACRGRWHLMSVMLSAASCLDWAAKLTGLASVPALIAAAQTADESAGPVWFLPYLSGERTPHNNPQAKGVFFGLTHQHGPAELARAVLEGVGYALADGMDVVHACAIKPEAITLIGGGRARYWRQMLADISGLQLDYRTGGDVGPALGAARLAHVAVHDEADRPGLLKPLPLEQAHRPDDRRVAHYAPQREIFARIFSKLKPLMS</sequence>
<evidence type="ECO:0000255" key="1">
    <source>
        <dbReference type="HAMAP-Rule" id="MF_02220"/>
    </source>
</evidence>
<evidence type="ECO:0000305" key="2"/>
<reference key="1">
    <citation type="journal article" date="1992" name="Mol. Gen. Genet.">
        <title>Cloning and expression of the genes for xylose isomerase and xylulokinase from Klebsiella pneumoniae 1033 in Escherichia coli K12.</title>
        <authorList>
            <person name="Feldmann S.D."/>
            <person name="Sahm H."/>
            <person name="Sprenger G.A."/>
        </authorList>
    </citation>
    <scope>NUCLEOTIDE SEQUENCE [GENOMIC DNA]</scope>
    <source>
        <strain>1033-5P14 / KAY2026</strain>
    </source>
</reference>
<keyword id="KW-0067">ATP-binding</keyword>
<keyword id="KW-0119">Carbohydrate metabolism</keyword>
<keyword id="KW-0418">Kinase</keyword>
<keyword id="KW-0547">Nucleotide-binding</keyword>
<keyword id="KW-0808">Transferase</keyword>
<keyword id="KW-0859">Xylose metabolism</keyword>
<organism>
    <name type="scientific">Klebsiella pneumoniae</name>
    <dbReference type="NCBI Taxonomy" id="573"/>
    <lineage>
        <taxon>Bacteria</taxon>
        <taxon>Pseudomonadati</taxon>
        <taxon>Pseudomonadota</taxon>
        <taxon>Gammaproteobacteria</taxon>
        <taxon>Enterobacterales</taxon>
        <taxon>Enterobacteriaceae</taxon>
        <taxon>Klebsiella/Raoultella group</taxon>
        <taxon>Klebsiella</taxon>
        <taxon>Klebsiella pneumoniae complex</taxon>
    </lineage>
</organism>
<comment type="function">
    <text evidence="1">Catalyzes the phosphorylation of D-xylulose to D-xylulose 5-phosphate.</text>
</comment>
<comment type="catalytic activity">
    <reaction evidence="1">
        <text>D-xylulose + ATP = D-xylulose 5-phosphate + ADP + H(+)</text>
        <dbReference type="Rhea" id="RHEA:10964"/>
        <dbReference type="ChEBI" id="CHEBI:15378"/>
        <dbReference type="ChEBI" id="CHEBI:17140"/>
        <dbReference type="ChEBI" id="CHEBI:30616"/>
        <dbReference type="ChEBI" id="CHEBI:57737"/>
        <dbReference type="ChEBI" id="CHEBI:456216"/>
        <dbReference type="EC" id="2.7.1.17"/>
    </reaction>
</comment>
<comment type="similarity">
    <text evidence="1 2">Belongs to the FGGY kinase family.</text>
</comment>